<keyword id="KW-0903">Direct protein sequencing</keyword>
<keyword id="KW-0964">Secreted</keyword>
<sequence length="12" mass="1331">ILCINVAGRRIC</sequence>
<proteinExistence type="evidence at protein level"/>
<name>SKSP3_ASCTR</name>
<feature type="peptide" id="PRO_0000233930" description="Skin secreted peptide 3" evidence="1">
    <location>
        <begin position="1"/>
        <end position="12"/>
    </location>
</feature>
<evidence type="ECO:0000269" key="1">
    <source>
    </source>
</evidence>
<evidence type="ECO:0000305" key="2"/>
<organism>
    <name type="scientific">Ascaphus truei</name>
    <name type="common">Coastal tailed frog</name>
    <dbReference type="NCBI Taxonomy" id="8439"/>
    <lineage>
        <taxon>Eukaryota</taxon>
        <taxon>Metazoa</taxon>
        <taxon>Chordata</taxon>
        <taxon>Craniata</taxon>
        <taxon>Vertebrata</taxon>
        <taxon>Euteleostomi</taxon>
        <taxon>Amphibia</taxon>
        <taxon>Batrachia</taxon>
        <taxon>Anura</taxon>
        <taxon>Ascaphidae</taxon>
        <taxon>Ascaphus</taxon>
    </lineage>
</organism>
<accession>P84828</accession>
<reference evidence="2" key="1">
    <citation type="journal article" date="2005" name="Gen. Comp. Endocrinol.">
        <title>Bradykinin-related peptides and tryptophyllins in the skin secretions of the most primitive extant frog, Ascaphus truei.</title>
        <authorList>
            <person name="Conlon J.M."/>
            <person name="Jouenne T."/>
            <person name="Cosette P."/>
            <person name="Cosquer D."/>
            <person name="Vaudry H."/>
            <person name="Taylor C.K."/>
            <person name="Abel P.W."/>
        </authorList>
    </citation>
    <scope>PROTEIN SEQUENCE</scope>
    <scope>SUBCELLULAR LOCATION</scope>
    <scope>TISSUE SPECIFICITY</scope>
    <scope>MASS SPECTROMETRY</scope>
    <source>
        <tissue evidence="1">Skin secretion</tissue>
    </source>
</reference>
<dbReference type="GO" id="GO:0005576">
    <property type="term" value="C:extracellular region"/>
    <property type="evidence" value="ECO:0000314"/>
    <property type="project" value="UniProtKB"/>
</dbReference>
<protein>
    <recommendedName>
        <fullName>Skin secreted peptide 3</fullName>
    </recommendedName>
</protein>
<comment type="subcellular location">
    <subcellularLocation>
        <location evidence="1">Secreted</location>
    </subcellularLocation>
</comment>
<comment type="tissue specificity">
    <text evidence="1">Expressed by the skin glands.</text>
</comment>
<comment type="mass spectrometry" mass="1327.7" method="MALDI" evidence="1"/>